<keyword id="KW-0002">3D-structure</keyword>
<keyword id="KW-1064">Adaptive immunity</keyword>
<keyword id="KW-1003">Cell membrane</keyword>
<keyword id="KW-0391">Immunity</keyword>
<keyword id="KW-0472">Membrane</keyword>
<keyword id="KW-0675">Receptor</keyword>
<keyword id="KW-1185">Reference proteome</keyword>
<keyword id="KW-1279">T cell receptor</keyword>
<reference key="1">
    <citation type="journal article" date="2001" name="Science">
        <title>The sequence of the human genome.</title>
        <authorList>
            <person name="Venter J.C."/>
            <person name="Adams M.D."/>
            <person name="Myers E.W."/>
            <person name="Li P.W."/>
            <person name="Mural R.J."/>
            <person name="Sutton G.G."/>
            <person name="Smith H.O."/>
            <person name="Yandell M."/>
            <person name="Evans C.A."/>
            <person name="Holt R.A."/>
            <person name="Gocayne J.D."/>
            <person name="Amanatides P."/>
            <person name="Ballew R.M."/>
            <person name="Huson D.H."/>
            <person name="Wortman J.R."/>
            <person name="Zhang Q."/>
            <person name="Kodira C.D."/>
            <person name="Zheng X.H."/>
            <person name="Chen L."/>
            <person name="Skupski M."/>
            <person name="Subramanian G."/>
            <person name="Thomas P.D."/>
            <person name="Zhang J."/>
            <person name="Gabor Miklos G.L."/>
            <person name="Nelson C."/>
            <person name="Broder S."/>
            <person name="Clark A.G."/>
            <person name="Nadeau J."/>
            <person name="McKusick V.A."/>
            <person name="Zinder N."/>
            <person name="Levine A.J."/>
            <person name="Roberts R.J."/>
            <person name="Simon M."/>
            <person name="Slayman C."/>
            <person name="Hunkapiller M."/>
            <person name="Bolanos R."/>
            <person name="Delcher A."/>
            <person name="Dew I."/>
            <person name="Fasulo D."/>
            <person name="Flanigan M."/>
            <person name="Florea L."/>
            <person name="Halpern A."/>
            <person name="Hannenhalli S."/>
            <person name="Kravitz S."/>
            <person name="Levy S."/>
            <person name="Mobarry C."/>
            <person name="Reinert K."/>
            <person name="Remington K."/>
            <person name="Abu-Threideh J."/>
            <person name="Beasley E."/>
            <person name="Biddick K."/>
            <person name="Bonazzi V."/>
            <person name="Brandon R."/>
            <person name="Cargill M."/>
            <person name="Chandramouliswaran I."/>
            <person name="Charlab R."/>
            <person name="Chaturvedi K."/>
            <person name="Deng Z."/>
            <person name="Di Francesco V."/>
            <person name="Dunn P."/>
            <person name="Eilbeck K."/>
            <person name="Evangelista C."/>
            <person name="Gabrielian A.E."/>
            <person name="Gan W."/>
            <person name="Ge W."/>
            <person name="Gong F."/>
            <person name="Gu Z."/>
            <person name="Guan P."/>
            <person name="Heiman T.J."/>
            <person name="Higgins M.E."/>
            <person name="Ji R.R."/>
            <person name="Ke Z."/>
            <person name="Ketchum K.A."/>
            <person name="Lai Z."/>
            <person name="Lei Y."/>
            <person name="Li Z."/>
            <person name="Li J."/>
            <person name="Liang Y."/>
            <person name="Lin X."/>
            <person name="Lu F."/>
            <person name="Merkulov G.V."/>
            <person name="Milshina N."/>
            <person name="Moore H.M."/>
            <person name="Naik A.K."/>
            <person name="Narayan V.A."/>
            <person name="Neelam B."/>
            <person name="Nusskern D."/>
            <person name="Rusch D.B."/>
            <person name="Salzberg S."/>
            <person name="Shao W."/>
            <person name="Shue B."/>
            <person name="Sun J."/>
            <person name="Wang Z."/>
            <person name="Wang A."/>
            <person name="Wang X."/>
            <person name="Wang J."/>
            <person name="Wei M."/>
            <person name="Wides R."/>
            <person name="Xiao C."/>
            <person name="Yan C."/>
            <person name="Yao A."/>
            <person name="Ye J."/>
            <person name="Zhan M."/>
            <person name="Zhang W."/>
            <person name="Zhang H."/>
            <person name="Zhao Q."/>
            <person name="Zheng L."/>
            <person name="Zhong F."/>
            <person name="Zhong W."/>
            <person name="Zhu S."/>
            <person name="Zhao S."/>
            <person name="Gilbert D."/>
            <person name="Baumhueter S."/>
            <person name="Spier G."/>
            <person name="Carter C."/>
            <person name="Cravchik A."/>
            <person name="Woodage T."/>
            <person name="Ali F."/>
            <person name="An H."/>
            <person name="Awe A."/>
            <person name="Baldwin D."/>
            <person name="Baden H."/>
            <person name="Barnstead M."/>
            <person name="Barrow I."/>
            <person name="Beeson K."/>
            <person name="Busam D."/>
            <person name="Carver A."/>
            <person name="Center A."/>
            <person name="Cheng M.L."/>
            <person name="Curry L."/>
            <person name="Danaher S."/>
            <person name="Davenport L."/>
            <person name="Desilets R."/>
            <person name="Dietz S."/>
            <person name="Dodson K."/>
            <person name="Doup L."/>
            <person name="Ferriera S."/>
            <person name="Garg N."/>
            <person name="Gluecksmann A."/>
            <person name="Hart B."/>
            <person name="Haynes J."/>
            <person name="Haynes C."/>
            <person name="Heiner C."/>
            <person name="Hladun S."/>
            <person name="Hostin D."/>
            <person name="Houck J."/>
            <person name="Howland T."/>
            <person name="Ibegwam C."/>
            <person name="Johnson J."/>
            <person name="Kalush F."/>
            <person name="Kline L."/>
            <person name="Koduru S."/>
            <person name="Love A."/>
            <person name="Mann F."/>
            <person name="May D."/>
            <person name="McCawley S."/>
            <person name="McIntosh T."/>
            <person name="McMullen I."/>
            <person name="Moy M."/>
            <person name="Moy L."/>
            <person name="Murphy B."/>
            <person name="Nelson K."/>
            <person name="Pfannkoch C."/>
            <person name="Pratts E."/>
            <person name="Puri V."/>
            <person name="Qureshi H."/>
            <person name="Reardon M."/>
            <person name="Rodriguez R."/>
            <person name="Rogers Y.H."/>
            <person name="Romblad D."/>
            <person name="Ruhfel B."/>
            <person name="Scott R."/>
            <person name="Sitter C."/>
            <person name="Smallwood M."/>
            <person name="Stewart E."/>
            <person name="Strong R."/>
            <person name="Suh E."/>
            <person name="Thomas R."/>
            <person name="Tint N.N."/>
            <person name="Tse S."/>
            <person name="Vech C."/>
            <person name="Wang G."/>
            <person name="Wetter J."/>
            <person name="Williams S."/>
            <person name="Williams M."/>
            <person name="Windsor S."/>
            <person name="Winn-Deen E."/>
            <person name="Wolfe K."/>
            <person name="Zaveri J."/>
            <person name="Zaveri K."/>
            <person name="Abril J.F."/>
            <person name="Guigo R."/>
            <person name="Campbell M.J."/>
            <person name="Sjolander K.V."/>
            <person name="Karlak B."/>
            <person name="Kejariwal A."/>
            <person name="Mi H."/>
            <person name="Lazareva B."/>
            <person name="Hatton T."/>
            <person name="Narechania A."/>
            <person name="Diemer K."/>
            <person name="Muruganujan A."/>
            <person name="Guo N."/>
            <person name="Sato S."/>
            <person name="Bafna V."/>
            <person name="Istrail S."/>
            <person name="Lippert R."/>
            <person name="Schwartz R."/>
            <person name="Walenz B."/>
            <person name="Yooseph S."/>
            <person name="Allen D."/>
            <person name="Basu A."/>
            <person name="Baxendale J."/>
            <person name="Blick L."/>
            <person name="Caminha M."/>
            <person name="Carnes-Stine J."/>
            <person name="Caulk P."/>
            <person name="Chiang Y.H."/>
            <person name="Coyne M."/>
            <person name="Dahlke C."/>
            <person name="Mays A."/>
            <person name="Dombroski M."/>
            <person name="Donnelly M."/>
            <person name="Ely D."/>
            <person name="Esparham S."/>
            <person name="Fosler C."/>
            <person name="Gire H."/>
            <person name="Glanowski S."/>
            <person name="Glasser K."/>
            <person name="Glodek A."/>
            <person name="Gorokhov M."/>
            <person name="Graham K."/>
            <person name="Gropman B."/>
            <person name="Harris M."/>
            <person name="Heil J."/>
            <person name="Henderson S."/>
            <person name="Hoover J."/>
            <person name="Jennings D."/>
            <person name="Jordan C."/>
            <person name="Jordan J."/>
            <person name="Kasha J."/>
            <person name="Kagan L."/>
            <person name="Kraft C."/>
            <person name="Levitsky A."/>
            <person name="Lewis M."/>
            <person name="Liu X."/>
            <person name="Lopez J."/>
            <person name="Ma D."/>
            <person name="Majoros W."/>
            <person name="McDaniel J."/>
            <person name="Murphy S."/>
            <person name="Newman M."/>
            <person name="Nguyen T."/>
            <person name="Nguyen N."/>
            <person name="Nodell M."/>
            <person name="Pan S."/>
            <person name="Peck J."/>
            <person name="Peterson M."/>
            <person name="Rowe W."/>
            <person name="Sanders R."/>
            <person name="Scott J."/>
            <person name="Simpson M."/>
            <person name="Smith T."/>
            <person name="Sprague A."/>
            <person name="Stockwell T."/>
            <person name="Turner R."/>
            <person name="Venter E."/>
            <person name="Wang M."/>
            <person name="Wen M."/>
            <person name="Wu D."/>
            <person name="Wu M."/>
            <person name="Xia A."/>
            <person name="Zandieh A."/>
            <person name="Zhu X."/>
        </authorList>
    </citation>
    <scope>NUCLEOTIDE SEQUENCE [LARGE SCALE GENOMIC DNA] (IMGT ALLELE TRBJ2-3*01)</scope>
</reference>
<reference key="2">
    <citation type="journal article" date="2003" name="Nature">
        <title>The DNA sequence of human chromosome 7.</title>
        <authorList>
            <person name="Hillier L.W."/>
            <person name="Fulton R.S."/>
            <person name="Fulton L.A."/>
            <person name="Graves T.A."/>
            <person name="Pepin K.H."/>
            <person name="Wagner-McPherson C."/>
            <person name="Layman D."/>
            <person name="Maas J."/>
            <person name="Jaeger S."/>
            <person name="Walker R."/>
            <person name="Wylie K."/>
            <person name="Sekhon M."/>
            <person name="Becker M.C."/>
            <person name="O'Laughlin M.D."/>
            <person name="Schaller M.E."/>
            <person name="Fewell G.A."/>
            <person name="Delehaunty K.D."/>
            <person name="Miner T.L."/>
            <person name="Nash W.E."/>
            <person name="Cordes M."/>
            <person name="Du H."/>
            <person name="Sun H."/>
            <person name="Edwards J."/>
            <person name="Bradshaw-Cordum H."/>
            <person name="Ali J."/>
            <person name="Andrews S."/>
            <person name="Isak A."/>
            <person name="Vanbrunt A."/>
            <person name="Nguyen C."/>
            <person name="Du F."/>
            <person name="Lamar B."/>
            <person name="Courtney L."/>
            <person name="Kalicki J."/>
            <person name="Ozersky P."/>
            <person name="Bielicki L."/>
            <person name="Scott K."/>
            <person name="Holmes A."/>
            <person name="Harkins R."/>
            <person name="Harris A."/>
            <person name="Strong C.M."/>
            <person name="Hou S."/>
            <person name="Tomlinson C."/>
            <person name="Dauphin-Kohlberg S."/>
            <person name="Kozlowicz-Reilly A."/>
            <person name="Leonard S."/>
            <person name="Rohlfing T."/>
            <person name="Rock S.M."/>
            <person name="Tin-Wollam A.-M."/>
            <person name="Abbott A."/>
            <person name="Minx P."/>
            <person name="Maupin R."/>
            <person name="Strowmatt C."/>
            <person name="Latreille P."/>
            <person name="Miller N."/>
            <person name="Johnson D."/>
            <person name="Murray J."/>
            <person name="Woessner J.P."/>
            <person name="Wendl M.C."/>
            <person name="Yang S.-P."/>
            <person name="Schultz B.R."/>
            <person name="Wallis J.W."/>
            <person name="Spieth J."/>
            <person name="Bieri T.A."/>
            <person name="Nelson J.O."/>
            <person name="Berkowicz N."/>
            <person name="Wohldmann P.E."/>
            <person name="Cook L.L."/>
            <person name="Hickenbotham M.T."/>
            <person name="Eldred J."/>
            <person name="Williams D."/>
            <person name="Bedell J.A."/>
            <person name="Mardis E.R."/>
            <person name="Clifton S.W."/>
            <person name="Chissoe S.L."/>
            <person name="Marra M.A."/>
            <person name="Raymond C."/>
            <person name="Haugen E."/>
            <person name="Gillett W."/>
            <person name="Zhou Y."/>
            <person name="James R."/>
            <person name="Phelps K."/>
            <person name="Iadanoto S."/>
            <person name="Bubb K."/>
            <person name="Simms E."/>
            <person name="Levy R."/>
            <person name="Clendenning J."/>
            <person name="Kaul R."/>
            <person name="Kent W.J."/>
            <person name="Furey T.S."/>
            <person name="Baertsch R.A."/>
            <person name="Brent M.R."/>
            <person name="Keibler E."/>
            <person name="Flicek P."/>
            <person name="Bork P."/>
            <person name="Suyama M."/>
            <person name="Bailey J.A."/>
            <person name="Portnoy M.E."/>
            <person name="Torrents D."/>
            <person name="Chinwalla A.T."/>
            <person name="Gish W.R."/>
            <person name="Eddy S.R."/>
            <person name="McPherson J.D."/>
            <person name="Olson M.V."/>
            <person name="Eichler E.E."/>
            <person name="Green E.D."/>
            <person name="Waterston R.H."/>
            <person name="Wilson R.K."/>
        </authorList>
    </citation>
    <scope>NUCLEOTIDE SEQUENCE [LARGE SCALE GENOMIC DNA] (IMGT ALLELE TRBJ2-3*01)</scope>
</reference>
<reference key="3">
    <citation type="book" date="2001" name="The T Cell Receptor FactsBook.">
        <title>The T Cell Receptor FactsBook.</title>
        <editorList>
            <person name="Lefranc M.P."/>
            <person name="Lefranc G."/>
        </editorList>
        <authorList>
            <person name="Lefranc M.P."/>
            <person name="Lefranc G."/>
        </authorList>
    </citation>
    <scope>NOMENCLATURE</scope>
</reference>
<reference key="4">
    <citation type="journal article" date="2004" name="Nat. Rev. Immunol.">
        <title>The many important facets of T-cell repertoire diversity.</title>
        <authorList>
            <person name="Nikolich-Zugich J."/>
            <person name="Slifka M.K."/>
            <person name="Messaoudi I."/>
        </authorList>
    </citation>
    <scope>REVIEW ON T CELL REPERTOIRE DIVERSITY</scope>
</reference>
<reference key="5">
    <citation type="journal article" date="2010" name="Cold Spring Harb. Perspect. Biol.">
        <title>Structural biology of the T-cell receptor: insights into receptor assembly, ligand recognition, and initiation of signaling.</title>
        <authorList>
            <person name="Wucherpfennig K.W."/>
            <person name="Gagnon E."/>
            <person name="Call M.J."/>
            <person name="Huseby E.S."/>
            <person name="Call M.E."/>
        </authorList>
    </citation>
    <scope>REVIEW ON T CELL RECEPTOR-CD3 COMPLEX ASSEMBLY</scope>
    <scope>SUBCELLULAR LOCATION</scope>
</reference>
<reference key="6">
    <citation type="journal article" date="2013" name="Nat. Rev. Immunol.">
        <title>T cell receptor signalling networks: branched, diversified and bounded.</title>
        <authorList>
            <person name="Brownlie R.J."/>
            <person name="Zamoyska R."/>
        </authorList>
    </citation>
    <scope>REVIEW ON T CELL RECEPTOR SIGNALING</scope>
</reference>
<reference key="7">
    <citation type="journal article" date="2014" name="Front. Immunol.">
        <title>Immunoglobulin and T Cell Receptor Genes: IMGT((R)) and the Birth and Rise of Immunoinformatics.</title>
        <authorList>
            <person name="Lefranc M.P."/>
        </authorList>
    </citation>
    <scope>NOMENCLATURE</scope>
</reference>
<reference key="8">
    <citation type="journal article" date="2015" name="Annu. Rev. Immunol.">
        <title>T cell antigen receptor recognition of antigen-presenting molecules.</title>
        <authorList>
            <person name="Rossjohn J."/>
            <person name="Gras S."/>
            <person name="Miles J.J."/>
            <person name="Turner S.J."/>
            <person name="Godfrey D.I."/>
            <person name="McCluskey J."/>
        </authorList>
    </citation>
    <scope>REVIEW ON FUNCTION</scope>
</reference>
<gene>
    <name evidence="6 7" type="primary">TRBJ2-3</name>
    <name type="ORF">hCG_2039521</name>
</gene>
<dbReference type="EMBL" id="CH471198">
    <property type="protein sequence ID" value="EAW51910.1"/>
    <property type="molecule type" value="Genomic_DNA"/>
</dbReference>
<dbReference type="EMBL" id="AC239618">
    <property type="status" value="NOT_ANNOTATED_CDS"/>
    <property type="molecule type" value="Genomic_DNA"/>
</dbReference>
<dbReference type="EMBL" id="AC245427">
    <property type="status" value="NOT_ANNOTATED_CDS"/>
    <property type="molecule type" value="Genomic_DNA"/>
</dbReference>
<dbReference type="PDB" id="7NDT">
    <property type="method" value="X-ray"/>
    <property type="resolution" value="3.00 A"/>
    <property type="chains" value="EEE/JJJ=3-16"/>
</dbReference>
<dbReference type="PDBsum" id="7NDT"/>
<dbReference type="SMR" id="A0A0B4J200"/>
<dbReference type="IMGT_GENE-DB" id="TRBJ2-3"/>
<dbReference type="BioMuta" id="TRBJ2-3"/>
<dbReference type="Ensembl" id="ENST00000390415.1">
    <property type="protein sequence ID" value="ENSP00000419595.1"/>
    <property type="gene ID" value="ENSG00000211767.1"/>
</dbReference>
<dbReference type="Ensembl" id="ENST00000631840.1">
    <property type="protein sequence ID" value="ENSP00000488292.1"/>
    <property type="gene ID" value="ENSG00000282371.1"/>
</dbReference>
<dbReference type="AGR" id="HGNC:12171"/>
<dbReference type="GeneCards" id="TRBJ2-3"/>
<dbReference type="HGNC" id="HGNC:12171">
    <property type="gene designation" value="TRBJ2-3"/>
</dbReference>
<dbReference type="HPA" id="ENSG00000211767">
    <property type="expression patterns" value="Tissue enhanced (lymphoid)"/>
</dbReference>
<dbReference type="neXtProt" id="NX_A0A0B4J200"/>
<dbReference type="VEuPathDB" id="HostDB:ENSG00000211767"/>
<dbReference type="HOGENOM" id="CLU_221942_7_2_1"/>
<dbReference type="InParanoid" id="A0A0B4J200"/>
<dbReference type="PAN-GO" id="A0A0B4J200">
    <property type="GO annotations" value="0 GO annotations based on evolutionary models"/>
</dbReference>
<dbReference type="ChiTaRS" id="TRBJ2-3">
    <property type="organism name" value="human"/>
</dbReference>
<dbReference type="PRO" id="PR:A0A0B4J200"/>
<dbReference type="Proteomes" id="UP000005640">
    <property type="component" value="Chromosome 7"/>
</dbReference>
<dbReference type="Bgee" id="ENSG00000211767">
    <property type="expression patterns" value="Expressed in granulocyte and 81 other cell types or tissues"/>
</dbReference>
<dbReference type="GO" id="GO:0042101">
    <property type="term" value="C:T cell receptor complex"/>
    <property type="evidence" value="ECO:0007669"/>
    <property type="project" value="UniProtKB-KW"/>
</dbReference>
<dbReference type="GO" id="GO:0002250">
    <property type="term" value="P:adaptive immune response"/>
    <property type="evidence" value="ECO:0007669"/>
    <property type="project" value="UniProtKB-KW"/>
</dbReference>
<proteinExistence type="evidence at protein level"/>
<sequence length="16" mass="1756">STDTQYFGPGTRLTVL</sequence>
<feature type="chain" id="PRO_0000447309" description="T cell receptor beta joining 2-3">
    <location>
        <begin position="1" status="less than"/>
        <end position="16" status="greater than"/>
    </location>
</feature>
<feature type="non-terminal residue">
    <location>
        <position position="1"/>
    </location>
</feature>
<feature type="non-terminal residue">
    <location>
        <position position="16"/>
    </location>
</feature>
<comment type="function">
    <text evidence="1 3 4 5">J region of the variable domain of T cell receptor (TR) beta chain that participates in the antigen recognition (PubMed:24600447). Alpha-beta T cell receptors are antigen specific receptors which are essential to the immune response and are present on the cell surface of T lymphocytes. Recognize peptide-major histocompatibility (MH) (pMH) complexes that are displayed by antigen presenting cells (APC), a prerequisite for efficient T cell adaptive immunity against pathogens (PubMed:25493333). Binding of alpha-beta TR to pMH complex initiates TR-CD3 clustering on the cell surface and intracellular activation of LCK that phosphorylates the ITAM motifs of CD3G, CD3D, CD3E and CD247 enabling the recruitment of ZAP70. In turn ZAP70 phosphorylates LAT, which recruits numerous signaling molecules to form the LAT signalosome. The LAT signalosome propagates signal branching to three major signaling pathways, the calcium, the mitogen-activated protein kinase (MAPK) kinase and the nuclear factor NF-kappa-B (NF-kB) pathways, leading to the mobilization of transcription factors that are critical for gene expression and essential for T cell growth and differentiation (PubMed:23524462). The T cell repertoire is generated in the thymus, by V-(D)-J rearrangement. This repertoire is then shaped by intrathymic selection events to generate a peripheral T cell pool of self-MH restricted, non-autoaggressive T cells. Post-thymic interaction of alpha-beta TR with the pMH complexes shapes TR structural and functional avidity (PubMed:15040585).</text>
</comment>
<comment type="subunit">
    <text evidence="2">Alpha-beta TR is a heterodimer composed of an alpha and beta chain; disulfide-linked. The alpha-beta TR is associated with the transmembrane signaling CD3 coreceptor proteins to form the TR-CD3 (TcR or TCR). The assembly of alpha-beta TR heterodimers with CD3 occurs in the endoplasmic reticulum where a single alpha-beta TR heterodimer associates with one CD3D-CD3E heterodimer, one CD3G-CD3E heterodimer and one CD247 homodimer forming a stable octameric structure. CD3D-CD3E and CD3G-CD3E heterodimers preferentially associate with TR alpha and TR beta chains, respectively. The association of the CD247 homodimer is the last step of TcR assembly in the endoplasmic reticulum and is required for transport to the cell surface.</text>
</comment>
<comment type="subcellular location">
    <subcellularLocation>
        <location evidence="2">Cell membrane</location>
    </subcellularLocation>
</comment>
<accession>A0A0B4J200</accession>
<name>TJB23_HUMAN</name>
<organism>
    <name type="scientific">Homo sapiens</name>
    <name type="common">Human</name>
    <dbReference type="NCBI Taxonomy" id="9606"/>
    <lineage>
        <taxon>Eukaryota</taxon>
        <taxon>Metazoa</taxon>
        <taxon>Chordata</taxon>
        <taxon>Craniata</taxon>
        <taxon>Vertebrata</taxon>
        <taxon>Euteleostomi</taxon>
        <taxon>Mammalia</taxon>
        <taxon>Eutheria</taxon>
        <taxon>Euarchontoglires</taxon>
        <taxon>Primates</taxon>
        <taxon>Haplorrhini</taxon>
        <taxon>Catarrhini</taxon>
        <taxon>Hominidae</taxon>
        <taxon>Homo</taxon>
    </lineage>
</organism>
<evidence type="ECO:0000303" key="1">
    <source>
    </source>
</evidence>
<evidence type="ECO:0000303" key="2">
    <source>
    </source>
</evidence>
<evidence type="ECO:0000303" key="3">
    <source>
    </source>
</evidence>
<evidence type="ECO:0000303" key="4">
    <source>
    </source>
</evidence>
<evidence type="ECO:0000303" key="5">
    <source>
    </source>
</evidence>
<evidence type="ECO:0000303" key="6">
    <source ref="3"/>
</evidence>
<evidence type="ECO:0000312" key="7">
    <source>
        <dbReference type="HGNC" id="HGNC:12171"/>
    </source>
</evidence>
<protein>
    <recommendedName>
        <fullName evidence="6">T cell receptor beta joining 2-3</fullName>
    </recommendedName>
</protein>